<comment type="function">
    <text evidence="1">Component of the A-type ATP synthase that produces ATP from ADP in the presence of a proton gradient across the membrane. The A chain is the catalytic subunit.</text>
</comment>
<comment type="catalytic activity">
    <reaction evidence="1">
        <text>ATP + H2O + 4 H(+)(in) = ADP + phosphate + 5 H(+)(out)</text>
        <dbReference type="Rhea" id="RHEA:57720"/>
        <dbReference type="ChEBI" id="CHEBI:15377"/>
        <dbReference type="ChEBI" id="CHEBI:15378"/>
        <dbReference type="ChEBI" id="CHEBI:30616"/>
        <dbReference type="ChEBI" id="CHEBI:43474"/>
        <dbReference type="ChEBI" id="CHEBI:456216"/>
        <dbReference type="EC" id="7.1.2.2"/>
    </reaction>
</comment>
<comment type="subunit">
    <text evidence="1">Has multiple subunits with at least A(3), B(3), C, D, E, F, H, I and proteolipid K(x).</text>
</comment>
<comment type="subcellular location">
    <subcellularLocation>
        <location evidence="1">Cell membrane</location>
        <topology evidence="1">Peripheral membrane protein</topology>
    </subcellularLocation>
</comment>
<comment type="similarity">
    <text evidence="1 2">Belongs to the ATPase alpha/beta chains family.</text>
</comment>
<gene>
    <name evidence="1" type="primary">atpA</name>
    <name type="ordered locus">HVO_0316</name>
</gene>
<dbReference type="EC" id="7.1.2.2" evidence="1"/>
<dbReference type="EMBL" id="X79516">
    <property type="protein sequence ID" value="CAA56051.1"/>
    <property type="molecule type" value="Genomic_DNA"/>
</dbReference>
<dbReference type="EMBL" id="CP001956">
    <property type="protein sequence ID" value="ADE04665.1"/>
    <property type="molecule type" value="Genomic_DNA"/>
</dbReference>
<dbReference type="PIR" id="S55895">
    <property type="entry name" value="S45144"/>
</dbReference>
<dbReference type="RefSeq" id="WP_004044607.1">
    <property type="nucleotide sequence ID" value="NC_013967.1"/>
</dbReference>
<dbReference type="SMR" id="Q48332"/>
<dbReference type="STRING" id="309800.HVO_0316"/>
<dbReference type="PaxDb" id="309800-C498_17108"/>
<dbReference type="EnsemblBacteria" id="ADE04665">
    <property type="protein sequence ID" value="ADE04665"/>
    <property type="gene ID" value="HVO_0316"/>
</dbReference>
<dbReference type="GeneID" id="8924169"/>
<dbReference type="KEGG" id="hvo:HVO_0316"/>
<dbReference type="eggNOG" id="arCOG00868">
    <property type="taxonomic scope" value="Archaea"/>
</dbReference>
<dbReference type="HOGENOM" id="CLU_008162_3_1_2"/>
<dbReference type="OrthoDB" id="115235at2157"/>
<dbReference type="Proteomes" id="UP000008243">
    <property type="component" value="Chromosome"/>
</dbReference>
<dbReference type="GO" id="GO:0005886">
    <property type="term" value="C:plasma membrane"/>
    <property type="evidence" value="ECO:0007669"/>
    <property type="project" value="UniProtKB-SubCell"/>
</dbReference>
<dbReference type="GO" id="GO:0033178">
    <property type="term" value="C:proton-transporting two-sector ATPase complex, catalytic domain"/>
    <property type="evidence" value="ECO:0007669"/>
    <property type="project" value="InterPro"/>
</dbReference>
<dbReference type="GO" id="GO:0005524">
    <property type="term" value="F:ATP binding"/>
    <property type="evidence" value="ECO:0007669"/>
    <property type="project" value="UniProtKB-UniRule"/>
</dbReference>
<dbReference type="GO" id="GO:0046933">
    <property type="term" value="F:proton-transporting ATP synthase activity, rotational mechanism"/>
    <property type="evidence" value="ECO:0007669"/>
    <property type="project" value="UniProtKB-UniRule"/>
</dbReference>
<dbReference type="GO" id="GO:0046961">
    <property type="term" value="F:proton-transporting ATPase activity, rotational mechanism"/>
    <property type="evidence" value="ECO:0007669"/>
    <property type="project" value="InterPro"/>
</dbReference>
<dbReference type="GO" id="GO:0042777">
    <property type="term" value="P:proton motive force-driven plasma membrane ATP synthesis"/>
    <property type="evidence" value="ECO:0007669"/>
    <property type="project" value="UniProtKB-UniRule"/>
</dbReference>
<dbReference type="CDD" id="cd18111">
    <property type="entry name" value="ATP-synt_V_A-type_alpha_C"/>
    <property type="match status" value="1"/>
</dbReference>
<dbReference type="CDD" id="cd18119">
    <property type="entry name" value="ATP-synt_V_A-type_alpha_N"/>
    <property type="match status" value="1"/>
</dbReference>
<dbReference type="CDD" id="cd01134">
    <property type="entry name" value="V_A-ATPase_A"/>
    <property type="match status" value="1"/>
</dbReference>
<dbReference type="FunFam" id="3.40.50.300:FF:000675">
    <property type="entry name" value="V-type ATP synthase alpha chain"/>
    <property type="match status" value="1"/>
</dbReference>
<dbReference type="FunFam" id="1.10.1140.10:FF:000002">
    <property type="entry name" value="V-type proton ATPase catalytic subunit A"/>
    <property type="match status" value="1"/>
</dbReference>
<dbReference type="FunFam" id="2.40.30.20:FF:000002">
    <property type="entry name" value="V-type proton ATPase catalytic subunit A"/>
    <property type="match status" value="1"/>
</dbReference>
<dbReference type="Gene3D" id="2.40.30.20">
    <property type="match status" value="1"/>
</dbReference>
<dbReference type="Gene3D" id="2.40.50.100">
    <property type="match status" value="1"/>
</dbReference>
<dbReference type="Gene3D" id="1.10.1140.10">
    <property type="entry name" value="Bovine Mitochondrial F1-atpase, Atp Synthase Beta Chain, Chain D, domain 3"/>
    <property type="match status" value="1"/>
</dbReference>
<dbReference type="Gene3D" id="3.40.50.300">
    <property type="entry name" value="P-loop containing nucleotide triphosphate hydrolases"/>
    <property type="match status" value="1"/>
</dbReference>
<dbReference type="HAMAP" id="MF_00309">
    <property type="entry name" value="ATP_synth_A_arch"/>
    <property type="match status" value="1"/>
</dbReference>
<dbReference type="InterPro" id="IPR055190">
    <property type="entry name" value="ATP-synt_VA_C"/>
</dbReference>
<dbReference type="InterPro" id="IPR031686">
    <property type="entry name" value="ATP-synth_a_Xtn"/>
</dbReference>
<dbReference type="InterPro" id="IPR023366">
    <property type="entry name" value="ATP_synth_asu-like_sf"/>
</dbReference>
<dbReference type="InterPro" id="IPR005726">
    <property type="entry name" value="ATP_synth_asu_arc"/>
</dbReference>
<dbReference type="InterPro" id="IPR020003">
    <property type="entry name" value="ATPase_a/bsu_AS"/>
</dbReference>
<dbReference type="InterPro" id="IPR004100">
    <property type="entry name" value="ATPase_F1/V1/A1_a/bsu_N"/>
</dbReference>
<dbReference type="InterPro" id="IPR036121">
    <property type="entry name" value="ATPase_F1/V1/A1_a/bsu_N_sf"/>
</dbReference>
<dbReference type="InterPro" id="IPR000194">
    <property type="entry name" value="ATPase_F1/V1/A1_a/bsu_nucl-bd"/>
</dbReference>
<dbReference type="InterPro" id="IPR024034">
    <property type="entry name" value="ATPase_F1/V1_b/a_C"/>
</dbReference>
<dbReference type="InterPro" id="IPR027417">
    <property type="entry name" value="P-loop_NTPase"/>
</dbReference>
<dbReference type="InterPro" id="IPR022878">
    <property type="entry name" value="V-ATPase_asu"/>
</dbReference>
<dbReference type="NCBIfam" id="TIGR01043">
    <property type="entry name" value="ATP_syn_A_arch"/>
    <property type="match status" value="1"/>
</dbReference>
<dbReference type="NCBIfam" id="NF003220">
    <property type="entry name" value="PRK04192.1"/>
    <property type="match status" value="1"/>
</dbReference>
<dbReference type="PANTHER" id="PTHR43607:SF1">
    <property type="entry name" value="H(+)-TRANSPORTING TWO-SECTOR ATPASE"/>
    <property type="match status" value="1"/>
</dbReference>
<dbReference type="PANTHER" id="PTHR43607">
    <property type="entry name" value="V-TYPE PROTON ATPASE CATALYTIC SUBUNIT A"/>
    <property type="match status" value="1"/>
</dbReference>
<dbReference type="Pfam" id="PF00006">
    <property type="entry name" value="ATP-synt_ab"/>
    <property type="match status" value="1"/>
</dbReference>
<dbReference type="Pfam" id="PF02874">
    <property type="entry name" value="ATP-synt_ab_N"/>
    <property type="match status" value="1"/>
</dbReference>
<dbReference type="Pfam" id="PF16886">
    <property type="entry name" value="ATP-synt_ab_Xtn"/>
    <property type="match status" value="1"/>
</dbReference>
<dbReference type="Pfam" id="PF22919">
    <property type="entry name" value="ATP-synt_VA_C"/>
    <property type="match status" value="1"/>
</dbReference>
<dbReference type="SUPFAM" id="SSF47917">
    <property type="entry name" value="C-terminal domain of alpha and beta subunits of F1 ATP synthase"/>
    <property type="match status" value="1"/>
</dbReference>
<dbReference type="SUPFAM" id="SSF50615">
    <property type="entry name" value="N-terminal domain of alpha and beta subunits of F1 ATP synthase"/>
    <property type="match status" value="1"/>
</dbReference>
<dbReference type="SUPFAM" id="SSF52540">
    <property type="entry name" value="P-loop containing nucleoside triphosphate hydrolases"/>
    <property type="match status" value="1"/>
</dbReference>
<dbReference type="PROSITE" id="PS00152">
    <property type="entry name" value="ATPASE_ALPHA_BETA"/>
    <property type="match status" value="1"/>
</dbReference>
<feature type="chain" id="PRO_0000144595" description="A-type ATP synthase subunit A">
    <location>
        <begin position="1"/>
        <end position="586"/>
    </location>
</feature>
<feature type="binding site" evidence="1">
    <location>
        <begin position="238"/>
        <end position="245"/>
    </location>
    <ligand>
        <name>ATP</name>
        <dbReference type="ChEBI" id="CHEBI:30616"/>
    </ligand>
</feature>
<proteinExistence type="evidence at protein level"/>
<reference key="1">
    <citation type="journal article" date="1995" name="Biochim. Biophys. Acta">
        <title>Nucleotide sequence of the ATPase A- and B-subunits of the halophilic archaebacterium Haloferax volcanii and characterization of the enzyme.</title>
        <authorList>
            <person name="Steinert K."/>
            <person name="Kroth-Pancic P.G."/>
            <person name="Bickel-Sandkoetter S."/>
        </authorList>
    </citation>
    <scope>NUCLEOTIDE SEQUENCE [GENOMIC DNA]</scope>
    <scope>CHARACTERIZATION</scope>
    <source>
        <strain>DS2 / WR 340</strain>
    </source>
</reference>
<reference key="2">
    <citation type="journal article" date="2010" name="PLoS ONE">
        <title>The complete genome sequence of Haloferax volcanii DS2, a model archaeon.</title>
        <authorList>
            <person name="Hartman A.L."/>
            <person name="Norais C."/>
            <person name="Badger J.H."/>
            <person name="Delmas S."/>
            <person name="Haldenby S."/>
            <person name="Madupu R."/>
            <person name="Robinson J."/>
            <person name="Khouri H."/>
            <person name="Ren Q."/>
            <person name="Lowe T.M."/>
            <person name="Maupin-Furlow J."/>
            <person name="Pohlschroder M."/>
            <person name="Daniels C."/>
            <person name="Pfeiffer F."/>
            <person name="Allers T."/>
            <person name="Eisen J.A."/>
        </authorList>
    </citation>
    <scope>NUCLEOTIDE SEQUENCE [LARGE SCALE GENOMIC DNA]</scope>
    <source>
        <strain>ATCC 29605 / DSM 3757 / JCM 8879 / NBRC 14742 / NCIMB 2012 / VKM B-1768 / DS2</strain>
    </source>
</reference>
<keyword id="KW-0066">ATP synthesis</keyword>
<keyword id="KW-0067">ATP-binding</keyword>
<keyword id="KW-1003">Cell membrane</keyword>
<keyword id="KW-0375">Hydrogen ion transport</keyword>
<keyword id="KW-0406">Ion transport</keyword>
<keyword id="KW-0472">Membrane</keyword>
<keyword id="KW-0547">Nucleotide-binding</keyword>
<keyword id="KW-1185">Reference proteome</keyword>
<keyword id="KW-1278">Translocase</keyword>
<keyword id="KW-0813">Transport</keyword>
<protein>
    <recommendedName>
        <fullName evidence="1">A-type ATP synthase subunit A</fullName>
        <ecNumber evidence="1">7.1.2.2</ecNumber>
    </recommendedName>
</protein>
<sequence>MSQATQDSVREDGVIASVSGPVVTARGLDARMNDVVYVGDEGLMGEVIEIEGDLTTIQVYEETSGVGPGEPVESTGEPLTVDLGPGMMDAIYDGVQRPLDVLESKMDSAFLDRGVDAPGIDLDEKWEFEPTVSEGDEVAPGDVVGTVPETVTIEHKVMVPPDFGGGEVVAVEEGEFSVTEAVVELDSGEEITMHQEWPVRQARPAAEKKTPREPLVSGQRILDGLFPIAKGGTAAIPGPFGSGKTVTQHQLAKWADADIVVYVGCGERGNEMTEVIEDFPELDDPKTGNPLMARTCLIANTSNMPVAARESCIYTGITIAEYYRDMGYDVALMADSTSRWAEAMREISSRLEEMPGEEGYPAYLAARLSEFYERAGYFTTVNGEEGSVSVIGAVSPPGGDFSEPVTQNTLRIVKTFWALDADLAERRHFPAINWNESYSLYQEQLDPWFVENVEDDWAEERQWAVDVLDEENELQEIVQLVGKDALPEDQQLTLEIARYLREAYLQQNAFHPTDTYCSPEKTYGILTAIHAFNDEAFKALEAGVPVEEIQAIEAAPRLNRIGVQEDWEAYIEDLKAEITEQLRELY</sequence>
<accession>Q48332</accession>
<accession>D4GZU5</accession>
<evidence type="ECO:0000255" key="1">
    <source>
        <dbReference type="HAMAP-Rule" id="MF_00309"/>
    </source>
</evidence>
<evidence type="ECO:0000305" key="2"/>
<name>AATA_HALVD</name>
<organism>
    <name type="scientific">Haloferax volcanii (strain ATCC 29605 / DSM 3757 / JCM 8879 / NBRC 14742 / NCIMB 2012 / VKM B-1768 / DS2)</name>
    <name type="common">Halobacterium volcanii</name>
    <dbReference type="NCBI Taxonomy" id="309800"/>
    <lineage>
        <taxon>Archaea</taxon>
        <taxon>Methanobacteriati</taxon>
        <taxon>Methanobacteriota</taxon>
        <taxon>Stenosarchaea group</taxon>
        <taxon>Halobacteria</taxon>
        <taxon>Halobacteriales</taxon>
        <taxon>Haloferacaceae</taxon>
        <taxon>Haloferax</taxon>
    </lineage>
</organism>